<sequence length="491" mass="52936">MSDPRAVDPTARDIAEKLAPAYRTMLDAIAQVEPRIAEATRAELTDQRHSLKLIASENYASLPVLATMGTWFSDKYAEGTAGHRFYAGCQNVDTVETIAAEHACALFGAEHAYVQPHSGIDANLTAYWTILAHHIETPALSEFGARTVNDLTQVDWDTLRHRFNDQRAIGMSLDAGGHLTHGFRPNISGKMFDQRSYGTDPQTGLLDYDKVAELAREFKPLVIVAGYSAYPRRVNFAKMREIADEVGAVLMVDMAHFAGLVAGKVFTGDENPIPHAQVVTTTTHKSLRGPRGGMVLTTKDYADDVDRGCPMVLGGPLSHVMAAKAVALAEARTQTFRDYAQRVANNAKALAEGLMKRGVKLVTDGTDNHINLLDVTTSFGLTGRQAEAALLDAGVVTNRNSIPTDPNGAWYTSGIRIGTPALTSRGFGPDEFDQVAELIVTTLEATTPMTASTGKPGKAKYQIADGVAQKVHDAADELLGNFPLYPGLDLA</sequence>
<proteinExistence type="inferred from homology"/>
<organism>
    <name type="scientific">Cutibacterium acnes (strain DSM 16379 / KPA171202)</name>
    <name type="common">Propionibacterium acnes</name>
    <dbReference type="NCBI Taxonomy" id="267747"/>
    <lineage>
        <taxon>Bacteria</taxon>
        <taxon>Bacillati</taxon>
        <taxon>Actinomycetota</taxon>
        <taxon>Actinomycetes</taxon>
        <taxon>Propionibacteriales</taxon>
        <taxon>Propionibacteriaceae</taxon>
        <taxon>Cutibacterium</taxon>
    </lineage>
</organism>
<reference key="1">
    <citation type="journal article" date="2004" name="Science">
        <title>The complete genome sequence of Propionibacterium acnes, a commensal of human skin.</title>
        <authorList>
            <person name="Brueggemann H."/>
            <person name="Henne A."/>
            <person name="Hoster F."/>
            <person name="Liesegang H."/>
            <person name="Wiezer A."/>
            <person name="Strittmatter A."/>
            <person name="Hujer S."/>
            <person name="Duerre P."/>
            <person name="Gottschalk G."/>
        </authorList>
    </citation>
    <scope>NUCLEOTIDE SEQUENCE [LARGE SCALE GENOMIC DNA]</scope>
    <source>
        <strain>DSM 16379 / KPA171202</strain>
    </source>
</reference>
<name>GLYA_CUTAK</name>
<protein>
    <recommendedName>
        <fullName evidence="1">Serine hydroxymethyltransferase</fullName>
        <shortName evidence="1">SHMT</shortName>
        <shortName evidence="1">Serine methylase</shortName>
        <ecNumber evidence="1">2.1.2.1</ecNumber>
    </recommendedName>
</protein>
<accession>Q6AAU3</accession>
<evidence type="ECO:0000255" key="1">
    <source>
        <dbReference type="HAMAP-Rule" id="MF_00051"/>
    </source>
</evidence>
<comment type="function">
    <text evidence="1">Catalyzes the reversible interconversion of serine and glycine with tetrahydrofolate (THF) serving as the one-carbon carrier. This reaction serves as the major source of one-carbon groups required for the biosynthesis of purines, thymidylate, methionine, and other important biomolecules. Also exhibits THF-independent aldolase activity toward beta-hydroxyamino acids, producing glycine and aldehydes, via a retro-aldol mechanism.</text>
</comment>
<comment type="catalytic activity">
    <reaction evidence="1">
        <text>(6R)-5,10-methylene-5,6,7,8-tetrahydrofolate + glycine + H2O = (6S)-5,6,7,8-tetrahydrofolate + L-serine</text>
        <dbReference type="Rhea" id="RHEA:15481"/>
        <dbReference type="ChEBI" id="CHEBI:15377"/>
        <dbReference type="ChEBI" id="CHEBI:15636"/>
        <dbReference type="ChEBI" id="CHEBI:33384"/>
        <dbReference type="ChEBI" id="CHEBI:57305"/>
        <dbReference type="ChEBI" id="CHEBI:57453"/>
        <dbReference type="EC" id="2.1.2.1"/>
    </reaction>
</comment>
<comment type="cofactor">
    <cofactor evidence="1">
        <name>pyridoxal 5'-phosphate</name>
        <dbReference type="ChEBI" id="CHEBI:597326"/>
    </cofactor>
</comment>
<comment type="pathway">
    <text evidence="1">One-carbon metabolism; tetrahydrofolate interconversion.</text>
</comment>
<comment type="pathway">
    <text evidence="1">Amino-acid biosynthesis; glycine biosynthesis; glycine from L-serine: step 1/1.</text>
</comment>
<comment type="subunit">
    <text evidence="1">Homodimer.</text>
</comment>
<comment type="subcellular location">
    <subcellularLocation>
        <location evidence="1">Cytoplasm</location>
    </subcellularLocation>
</comment>
<comment type="similarity">
    <text evidence="1">Belongs to the SHMT family.</text>
</comment>
<dbReference type="EC" id="2.1.2.1" evidence="1"/>
<dbReference type="EMBL" id="AE017283">
    <property type="protein sequence ID" value="AAT82123.1"/>
    <property type="molecule type" value="Genomic_DNA"/>
</dbReference>
<dbReference type="RefSeq" id="WP_002517066.1">
    <property type="nucleotide sequence ID" value="NZ_CP025935.1"/>
</dbReference>
<dbReference type="SMR" id="Q6AAU3"/>
<dbReference type="EnsemblBacteria" id="AAT82123">
    <property type="protein sequence ID" value="AAT82123"/>
    <property type="gene ID" value="PPA0369"/>
</dbReference>
<dbReference type="KEGG" id="pac:PPA0369"/>
<dbReference type="eggNOG" id="COG0112">
    <property type="taxonomic scope" value="Bacteria"/>
</dbReference>
<dbReference type="HOGENOM" id="CLU_022477_2_1_11"/>
<dbReference type="UniPathway" id="UPA00193"/>
<dbReference type="UniPathway" id="UPA00288">
    <property type="reaction ID" value="UER01023"/>
</dbReference>
<dbReference type="Proteomes" id="UP000000603">
    <property type="component" value="Chromosome"/>
</dbReference>
<dbReference type="GO" id="GO:0005829">
    <property type="term" value="C:cytosol"/>
    <property type="evidence" value="ECO:0007669"/>
    <property type="project" value="TreeGrafter"/>
</dbReference>
<dbReference type="GO" id="GO:0004372">
    <property type="term" value="F:glycine hydroxymethyltransferase activity"/>
    <property type="evidence" value="ECO:0007669"/>
    <property type="project" value="UniProtKB-UniRule"/>
</dbReference>
<dbReference type="GO" id="GO:0030170">
    <property type="term" value="F:pyridoxal phosphate binding"/>
    <property type="evidence" value="ECO:0007669"/>
    <property type="project" value="UniProtKB-UniRule"/>
</dbReference>
<dbReference type="GO" id="GO:0019264">
    <property type="term" value="P:glycine biosynthetic process from serine"/>
    <property type="evidence" value="ECO:0007669"/>
    <property type="project" value="UniProtKB-UniRule"/>
</dbReference>
<dbReference type="GO" id="GO:0035999">
    <property type="term" value="P:tetrahydrofolate interconversion"/>
    <property type="evidence" value="ECO:0007669"/>
    <property type="project" value="UniProtKB-UniRule"/>
</dbReference>
<dbReference type="CDD" id="cd00378">
    <property type="entry name" value="SHMT"/>
    <property type="match status" value="1"/>
</dbReference>
<dbReference type="FunFam" id="3.40.640.10:FF:000060">
    <property type="entry name" value="Serine hydroxymethyltransferase"/>
    <property type="match status" value="1"/>
</dbReference>
<dbReference type="Gene3D" id="3.90.1150.10">
    <property type="entry name" value="Aspartate Aminotransferase, domain 1"/>
    <property type="match status" value="1"/>
</dbReference>
<dbReference type="Gene3D" id="3.40.640.10">
    <property type="entry name" value="Type I PLP-dependent aspartate aminotransferase-like (Major domain)"/>
    <property type="match status" value="1"/>
</dbReference>
<dbReference type="HAMAP" id="MF_00051">
    <property type="entry name" value="SHMT"/>
    <property type="match status" value="1"/>
</dbReference>
<dbReference type="InterPro" id="IPR015424">
    <property type="entry name" value="PyrdxlP-dep_Trfase"/>
</dbReference>
<dbReference type="InterPro" id="IPR015421">
    <property type="entry name" value="PyrdxlP-dep_Trfase_major"/>
</dbReference>
<dbReference type="InterPro" id="IPR015422">
    <property type="entry name" value="PyrdxlP-dep_Trfase_small"/>
</dbReference>
<dbReference type="InterPro" id="IPR001085">
    <property type="entry name" value="Ser_HO-MeTrfase"/>
</dbReference>
<dbReference type="InterPro" id="IPR049943">
    <property type="entry name" value="Ser_HO-MeTrfase-like"/>
</dbReference>
<dbReference type="InterPro" id="IPR019798">
    <property type="entry name" value="Ser_HO-MeTrfase_PLP_BS"/>
</dbReference>
<dbReference type="InterPro" id="IPR039429">
    <property type="entry name" value="SHMT-like_dom"/>
</dbReference>
<dbReference type="NCBIfam" id="NF000586">
    <property type="entry name" value="PRK00011.1"/>
    <property type="match status" value="1"/>
</dbReference>
<dbReference type="NCBIfam" id="NF010094">
    <property type="entry name" value="PRK13580.1"/>
    <property type="match status" value="1"/>
</dbReference>
<dbReference type="PANTHER" id="PTHR11680">
    <property type="entry name" value="SERINE HYDROXYMETHYLTRANSFERASE"/>
    <property type="match status" value="1"/>
</dbReference>
<dbReference type="PANTHER" id="PTHR11680:SF35">
    <property type="entry name" value="SERINE HYDROXYMETHYLTRANSFERASE 1"/>
    <property type="match status" value="1"/>
</dbReference>
<dbReference type="Pfam" id="PF00464">
    <property type="entry name" value="SHMT"/>
    <property type="match status" value="2"/>
</dbReference>
<dbReference type="PIRSF" id="PIRSF000412">
    <property type="entry name" value="SHMT"/>
    <property type="match status" value="1"/>
</dbReference>
<dbReference type="SUPFAM" id="SSF53383">
    <property type="entry name" value="PLP-dependent transferases"/>
    <property type="match status" value="1"/>
</dbReference>
<dbReference type="PROSITE" id="PS00096">
    <property type="entry name" value="SHMT"/>
    <property type="match status" value="1"/>
</dbReference>
<feature type="chain" id="PRO_0000235000" description="Serine hydroxymethyltransferase">
    <location>
        <begin position="1"/>
        <end position="491"/>
    </location>
</feature>
<feature type="binding site" evidence="1">
    <location>
        <position position="173"/>
    </location>
    <ligand>
        <name>(6S)-5,6,7,8-tetrahydrofolate</name>
        <dbReference type="ChEBI" id="CHEBI:57453"/>
    </ligand>
</feature>
<feature type="binding site" evidence="1">
    <location>
        <begin position="177"/>
        <end position="179"/>
    </location>
    <ligand>
        <name>(6S)-5,6,7,8-tetrahydrofolate</name>
        <dbReference type="ChEBI" id="CHEBI:57453"/>
    </ligand>
</feature>
<feature type="site" description="Plays an important role in substrate specificity" evidence="1">
    <location>
        <position position="284"/>
    </location>
</feature>
<feature type="modified residue" description="N6-(pyridoxal phosphate)lysine" evidence="1">
    <location>
        <position position="285"/>
    </location>
</feature>
<gene>
    <name evidence="1" type="primary">glyA</name>
    <name type="ordered locus">PPA0369</name>
</gene>
<keyword id="KW-0028">Amino-acid biosynthesis</keyword>
<keyword id="KW-0963">Cytoplasm</keyword>
<keyword id="KW-0554">One-carbon metabolism</keyword>
<keyword id="KW-0663">Pyridoxal phosphate</keyword>
<keyword id="KW-0808">Transferase</keyword>